<proteinExistence type="inferred from homology"/>
<gene>
    <name evidence="1" type="primary">ribA</name>
    <name type="ordered locus">NTHI0309</name>
</gene>
<reference key="1">
    <citation type="journal article" date="2005" name="J. Bacteriol.">
        <title>Genomic sequence of an otitis media isolate of nontypeable Haemophilus influenzae: comparative study with H. influenzae serotype d, strain KW20.</title>
        <authorList>
            <person name="Harrison A."/>
            <person name="Dyer D.W."/>
            <person name="Gillaspy A."/>
            <person name="Ray W.C."/>
            <person name="Mungur R."/>
            <person name="Carson M.B."/>
            <person name="Zhong H."/>
            <person name="Gipson J."/>
            <person name="Gipson M."/>
            <person name="Johnson L.S."/>
            <person name="Lewis L."/>
            <person name="Bakaletz L.O."/>
            <person name="Munson R.S. Jr."/>
        </authorList>
    </citation>
    <scope>NUCLEOTIDE SEQUENCE [LARGE SCALE GENOMIC DNA]</scope>
    <source>
        <strain>86-028NP</strain>
    </source>
</reference>
<keyword id="KW-0342">GTP-binding</keyword>
<keyword id="KW-0378">Hydrolase</keyword>
<keyword id="KW-0479">Metal-binding</keyword>
<keyword id="KW-0547">Nucleotide-binding</keyword>
<keyword id="KW-0686">Riboflavin biosynthesis</keyword>
<keyword id="KW-0862">Zinc</keyword>
<accession>Q4QNX8</accession>
<name>RIBA_HAEI8</name>
<feature type="chain" id="PRO_0000151759" description="GTP cyclohydrolase-2">
    <location>
        <begin position="1"/>
        <end position="216"/>
    </location>
</feature>
<feature type="active site" description="Proton acceptor" evidence="1">
    <location>
        <position position="128"/>
    </location>
</feature>
<feature type="active site" description="Nucleophile" evidence="1">
    <location>
        <position position="130"/>
    </location>
</feature>
<feature type="binding site" evidence="1">
    <location>
        <begin position="51"/>
        <end position="55"/>
    </location>
    <ligand>
        <name>GTP</name>
        <dbReference type="ChEBI" id="CHEBI:37565"/>
    </ligand>
</feature>
<feature type="binding site" evidence="1">
    <location>
        <position position="56"/>
    </location>
    <ligand>
        <name>Zn(2+)</name>
        <dbReference type="ChEBI" id="CHEBI:29105"/>
        <note>catalytic</note>
    </ligand>
</feature>
<feature type="binding site" evidence="1">
    <location>
        <position position="67"/>
    </location>
    <ligand>
        <name>Zn(2+)</name>
        <dbReference type="ChEBI" id="CHEBI:29105"/>
        <note>catalytic</note>
    </ligand>
</feature>
<feature type="binding site" evidence="1">
    <location>
        <position position="69"/>
    </location>
    <ligand>
        <name>Zn(2+)</name>
        <dbReference type="ChEBI" id="CHEBI:29105"/>
        <note>catalytic</note>
    </ligand>
</feature>
<feature type="binding site" evidence="1">
    <location>
        <position position="72"/>
    </location>
    <ligand>
        <name>GTP</name>
        <dbReference type="ChEBI" id="CHEBI:37565"/>
    </ligand>
</feature>
<feature type="binding site" evidence="1">
    <location>
        <begin position="94"/>
        <end position="96"/>
    </location>
    <ligand>
        <name>GTP</name>
        <dbReference type="ChEBI" id="CHEBI:37565"/>
    </ligand>
</feature>
<feature type="binding site" evidence="1">
    <location>
        <position position="116"/>
    </location>
    <ligand>
        <name>GTP</name>
        <dbReference type="ChEBI" id="CHEBI:37565"/>
    </ligand>
</feature>
<feature type="binding site" evidence="1">
    <location>
        <position position="151"/>
    </location>
    <ligand>
        <name>GTP</name>
        <dbReference type="ChEBI" id="CHEBI:37565"/>
    </ligand>
</feature>
<feature type="binding site" evidence="1">
    <location>
        <position position="156"/>
    </location>
    <ligand>
        <name>GTP</name>
        <dbReference type="ChEBI" id="CHEBI:37565"/>
    </ligand>
</feature>
<protein>
    <recommendedName>
        <fullName evidence="1">GTP cyclohydrolase-2</fullName>
        <ecNumber evidence="1">3.5.4.25</ecNumber>
    </recommendedName>
    <alternativeName>
        <fullName evidence="1">GTP cyclohydrolase II</fullName>
    </alternativeName>
</protein>
<evidence type="ECO:0000255" key="1">
    <source>
        <dbReference type="HAMAP-Rule" id="MF_00179"/>
    </source>
</evidence>
<evidence type="ECO:0000305" key="2"/>
<dbReference type="EC" id="3.5.4.25" evidence="1"/>
<dbReference type="EMBL" id="CP000057">
    <property type="protein sequence ID" value="AAX87269.1"/>
    <property type="status" value="ALT_INIT"/>
    <property type="molecule type" value="Genomic_DNA"/>
</dbReference>
<dbReference type="RefSeq" id="WP_005629111.1">
    <property type="nucleotide sequence ID" value="NC_007146.2"/>
</dbReference>
<dbReference type="SMR" id="Q4QNX8"/>
<dbReference type="GeneID" id="93219147"/>
<dbReference type="KEGG" id="hit:NTHI0309"/>
<dbReference type="HOGENOM" id="CLU_020273_2_1_6"/>
<dbReference type="UniPathway" id="UPA00275">
    <property type="reaction ID" value="UER00400"/>
</dbReference>
<dbReference type="Proteomes" id="UP000002525">
    <property type="component" value="Chromosome"/>
</dbReference>
<dbReference type="GO" id="GO:0005829">
    <property type="term" value="C:cytosol"/>
    <property type="evidence" value="ECO:0007669"/>
    <property type="project" value="TreeGrafter"/>
</dbReference>
<dbReference type="GO" id="GO:0005525">
    <property type="term" value="F:GTP binding"/>
    <property type="evidence" value="ECO:0007669"/>
    <property type="project" value="UniProtKB-KW"/>
</dbReference>
<dbReference type="GO" id="GO:0003935">
    <property type="term" value="F:GTP cyclohydrolase II activity"/>
    <property type="evidence" value="ECO:0007669"/>
    <property type="project" value="UniProtKB-UniRule"/>
</dbReference>
<dbReference type="GO" id="GO:0008270">
    <property type="term" value="F:zinc ion binding"/>
    <property type="evidence" value="ECO:0007669"/>
    <property type="project" value="UniProtKB-UniRule"/>
</dbReference>
<dbReference type="GO" id="GO:0009231">
    <property type="term" value="P:riboflavin biosynthetic process"/>
    <property type="evidence" value="ECO:0007669"/>
    <property type="project" value="UniProtKB-UniRule"/>
</dbReference>
<dbReference type="CDD" id="cd00641">
    <property type="entry name" value="GTP_cyclohydro2"/>
    <property type="match status" value="1"/>
</dbReference>
<dbReference type="FunFam" id="3.40.50.10990:FF:000002">
    <property type="entry name" value="GTP cyclohydrolase-2"/>
    <property type="match status" value="1"/>
</dbReference>
<dbReference type="Gene3D" id="3.40.50.10990">
    <property type="entry name" value="GTP cyclohydrolase II"/>
    <property type="match status" value="1"/>
</dbReference>
<dbReference type="HAMAP" id="MF_00179">
    <property type="entry name" value="RibA"/>
    <property type="match status" value="1"/>
</dbReference>
<dbReference type="InterPro" id="IPR032677">
    <property type="entry name" value="GTP_cyclohydro_II"/>
</dbReference>
<dbReference type="InterPro" id="IPR000926">
    <property type="entry name" value="RibA"/>
</dbReference>
<dbReference type="InterPro" id="IPR036144">
    <property type="entry name" value="RibA-like_sf"/>
</dbReference>
<dbReference type="NCBIfam" id="NF001591">
    <property type="entry name" value="PRK00393.1"/>
    <property type="match status" value="1"/>
</dbReference>
<dbReference type="NCBIfam" id="TIGR00505">
    <property type="entry name" value="ribA"/>
    <property type="match status" value="1"/>
</dbReference>
<dbReference type="PANTHER" id="PTHR21327:SF18">
    <property type="entry name" value="3,4-DIHYDROXY-2-BUTANONE 4-PHOSPHATE SYNTHASE"/>
    <property type="match status" value="1"/>
</dbReference>
<dbReference type="PANTHER" id="PTHR21327">
    <property type="entry name" value="GTP CYCLOHYDROLASE II-RELATED"/>
    <property type="match status" value="1"/>
</dbReference>
<dbReference type="Pfam" id="PF00925">
    <property type="entry name" value="GTP_cyclohydro2"/>
    <property type="match status" value="1"/>
</dbReference>
<dbReference type="SUPFAM" id="SSF142695">
    <property type="entry name" value="RibA-like"/>
    <property type="match status" value="1"/>
</dbReference>
<sequence length="216" mass="24320">MAKIQLVAQANLPTEYGIFKMVGFEFPDTKKEHVALVMGDISNADEPVLARIHSECLTGDALHSLKCDCGFQLATALKQIQEEGRGVLIYHREEGRGIGLINKIRAYSLQDKGMDTIEANLALGFKADERNFEVCADMFELLGVKKVRLMTNNPEKVETMKKAGINVVERVPLNVGENRYNTKYLDTKAKKMGHYIVHNNDEQHLMTCPHCQEEII</sequence>
<comment type="function">
    <text evidence="1">Catalyzes the conversion of GTP to 2,5-diamino-6-ribosylamino-4(3H)-pyrimidinone 5'-phosphate (DARP), formate and pyrophosphate.</text>
</comment>
<comment type="catalytic activity">
    <reaction evidence="1">
        <text>GTP + 4 H2O = 2,5-diamino-6-hydroxy-4-(5-phosphoribosylamino)-pyrimidine + formate + 2 phosphate + 3 H(+)</text>
        <dbReference type="Rhea" id="RHEA:23704"/>
        <dbReference type="ChEBI" id="CHEBI:15377"/>
        <dbReference type="ChEBI" id="CHEBI:15378"/>
        <dbReference type="ChEBI" id="CHEBI:15740"/>
        <dbReference type="ChEBI" id="CHEBI:37565"/>
        <dbReference type="ChEBI" id="CHEBI:43474"/>
        <dbReference type="ChEBI" id="CHEBI:58614"/>
        <dbReference type="EC" id="3.5.4.25"/>
    </reaction>
</comment>
<comment type="cofactor">
    <cofactor evidence="1">
        <name>Zn(2+)</name>
        <dbReference type="ChEBI" id="CHEBI:29105"/>
    </cofactor>
    <text evidence="1">Binds 1 zinc ion per subunit.</text>
</comment>
<comment type="pathway">
    <text evidence="1">Cofactor biosynthesis; riboflavin biosynthesis; 5-amino-6-(D-ribitylamino)uracil from GTP: step 1/4.</text>
</comment>
<comment type="similarity">
    <text evidence="1">Belongs to the GTP cyclohydrolase II family.</text>
</comment>
<comment type="sequence caution" evidence="2">
    <conflict type="erroneous initiation">
        <sequence resource="EMBL-CDS" id="AAX87269"/>
    </conflict>
</comment>
<organism>
    <name type="scientific">Haemophilus influenzae (strain 86-028NP)</name>
    <dbReference type="NCBI Taxonomy" id="281310"/>
    <lineage>
        <taxon>Bacteria</taxon>
        <taxon>Pseudomonadati</taxon>
        <taxon>Pseudomonadota</taxon>
        <taxon>Gammaproteobacteria</taxon>
        <taxon>Pasteurellales</taxon>
        <taxon>Pasteurellaceae</taxon>
        <taxon>Haemophilus</taxon>
    </lineage>
</organism>